<dbReference type="EMBL" id="ADVV01000029">
    <property type="protein sequence ID" value="EGA83158.1"/>
    <property type="molecule type" value="Genomic_DNA"/>
</dbReference>
<dbReference type="SMR" id="E7KMS3"/>
<dbReference type="GlyCosmos" id="E7KMS3">
    <property type="glycosylation" value="1 site, No reported glycans"/>
</dbReference>
<dbReference type="HOGENOM" id="CLU_043316_0_0_1"/>
<dbReference type="GO" id="GO:0042995">
    <property type="term" value="C:cell projection"/>
    <property type="evidence" value="ECO:0007669"/>
    <property type="project" value="UniProtKB-SubCell"/>
</dbReference>
<dbReference type="GO" id="GO:0005935">
    <property type="term" value="C:cellular bud neck"/>
    <property type="evidence" value="ECO:0007669"/>
    <property type="project" value="UniProtKB-SubCell"/>
</dbReference>
<dbReference type="GO" id="GO:0005886">
    <property type="term" value="C:plasma membrane"/>
    <property type="evidence" value="ECO:0007669"/>
    <property type="project" value="UniProtKB-SubCell"/>
</dbReference>
<dbReference type="GO" id="GO:0030833">
    <property type="term" value="P:regulation of actin filament polymerization"/>
    <property type="evidence" value="ECO:0007669"/>
    <property type="project" value="TreeGrafter"/>
</dbReference>
<dbReference type="CDD" id="cd11855">
    <property type="entry name" value="SH3_Sho1p"/>
    <property type="match status" value="1"/>
</dbReference>
<dbReference type="FunFam" id="2.30.30.40:FF:000213">
    <property type="entry name" value="High osmolarity signaling protein SHO1"/>
    <property type="match status" value="1"/>
</dbReference>
<dbReference type="Gene3D" id="2.30.30.40">
    <property type="entry name" value="SH3 Domains"/>
    <property type="match status" value="1"/>
</dbReference>
<dbReference type="InterPro" id="IPR036028">
    <property type="entry name" value="SH3-like_dom_sf"/>
</dbReference>
<dbReference type="InterPro" id="IPR001452">
    <property type="entry name" value="SH3_domain"/>
</dbReference>
<dbReference type="InterPro" id="IPR035522">
    <property type="entry name" value="Sho1_SH3"/>
</dbReference>
<dbReference type="PANTHER" id="PTHR15735">
    <property type="entry name" value="FCH AND DOUBLE SH3 DOMAINS PROTEIN"/>
    <property type="match status" value="1"/>
</dbReference>
<dbReference type="PANTHER" id="PTHR15735:SF20">
    <property type="entry name" value="HIGH OSMOLARITY SIGNALING PROTEIN SHO1"/>
    <property type="match status" value="1"/>
</dbReference>
<dbReference type="Pfam" id="PF00018">
    <property type="entry name" value="SH3_1"/>
    <property type="match status" value="1"/>
</dbReference>
<dbReference type="PRINTS" id="PR00452">
    <property type="entry name" value="SH3DOMAIN"/>
</dbReference>
<dbReference type="SMART" id="SM00326">
    <property type="entry name" value="SH3"/>
    <property type="match status" value="1"/>
</dbReference>
<dbReference type="SUPFAM" id="SSF50044">
    <property type="entry name" value="SH3-domain"/>
    <property type="match status" value="1"/>
</dbReference>
<dbReference type="PROSITE" id="PS50002">
    <property type="entry name" value="SH3"/>
    <property type="match status" value="1"/>
</dbReference>
<organism>
    <name type="scientific">Saccharomyces cerevisiae (strain Lalvin QA23)</name>
    <name type="common">Baker's yeast</name>
    <dbReference type="NCBI Taxonomy" id="764098"/>
    <lineage>
        <taxon>Eukaryota</taxon>
        <taxon>Fungi</taxon>
        <taxon>Dikarya</taxon>
        <taxon>Ascomycota</taxon>
        <taxon>Saccharomycotina</taxon>
        <taxon>Saccharomycetes</taxon>
        <taxon>Saccharomycetales</taxon>
        <taxon>Saccharomycetaceae</taxon>
        <taxon>Saccharomyces</taxon>
    </lineage>
</organism>
<feature type="chain" id="PRO_0000410414" description="High osmolarity signaling protein SHO1">
    <location>
        <begin position="1"/>
        <end position="367"/>
    </location>
</feature>
<feature type="topological domain" description="Cytoplasmic" evidence="3">
    <location>
        <begin position="1"/>
        <end position="32"/>
    </location>
</feature>
<feature type="transmembrane region" description="Helical" evidence="3">
    <location>
        <begin position="33"/>
        <end position="53"/>
    </location>
</feature>
<feature type="topological domain" description="Extracellular" evidence="3">
    <location>
        <begin position="54"/>
        <end position="65"/>
    </location>
</feature>
<feature type="transmembrane region" description="Helical" evidence="3">
    <location>
        <begin position="66"/>
        <end position="86"/>
    </location>
</feature>
<feature type="topological domain" description="Cytoplasmic" evidence="3">
    <location>
        <begin position="87"/>
        <end position="93"/>
    </location>
</feature>
<feature type="transmembrane region" description="Helical" evidence="3">
    <location>
        <begin position="94"/>
        <end position="114"/>
    </location>
</feature>
<feature type="topological domain" description="Extracellular" evidence="3">
    <location>
        <begin position="115"/>
        <end position="122"/>
    </location>
</feature>
<feature type="transmembrane region" description="Helical" evidence="3">
    <location>
        <begin position="123"/>
        <end position="143"/>
    </location>
</feature>
<feature type="topological domain" description="Cytoplasmic" evidence="3">
    <location>
        <begin position="144"/>
        <end position="367"/>
    </location>
</feature>
<feature type="domain" description="SH3" evidence="4">
    <location>
        <begin position="300"/>
        <end position="361"/>
    </location>
</feature>
<feature type="region of interest" description="Disordered" evidence="5">
    <location>
        <begin position="252"/>
        <end position="276"/>
    </location>
</feature>
<feature type="compositionally biased region" description="Low complexity" evidence="5">
    <location>
        <begin position="259"/>
        <end position="272"/>
    </location>
</feature>
<feature type="modified residue" description="Phosphoserine" evidence="2">
    <location>
        <position position="166"/>
    </location>
</feature>
<feature type="glycosylation site" description="N-linked (GlcNAc...) asparagine" evidence="3">
    <location>
        <position position="59"/>
    </location>
</feature>
<sequence>MSISSKIRPTPRKPSRMATDHSFKMKNFYADPFAISSISLAIVSWVIAIGGSISSASTNESFPRFTWWGIVYQFLIICSLMLFYCFDLVDHYRIFITTSIAVAFVYNTNSATNLVYADGPKKAAASAGVILLSIINLIWILYYGGDNASPTNRWIDSFSIKGIRPSPLENSLHRARRRGNRNTTPYQNNVYNDAIRDSGYATQFDGYPQQQPSHTNYVSSTALAGFENTQPNTSEAVNLHLNTLQQRINSASNAKETNDNSNNQTNTNIGNTFDTDFSNGNTETTMGDTLGLYSDIGDDNFIYKAKALYPYDADDDDAYEISFEQNEILQVSDIEGRWWKARRANGETGIIPSNYVQLIDGPEEMHR</sequence>
<reference key="1">
    <citation type="journal article" date="2011" name="PLoS Genet.">
        <title>Whole-genome comparison reveals novel genetic elements that characterize the genome of industrial strains of Saccharomyces cerevisiae.</title>
        <authorList>
            <person name="Borneman A.R."/>
            <person name="Desany B.A."/>
            <person name="Riches D."/>
            <person name="Affourtit J.P."/>
            <person name="Forgan A.H."/>
            <person name="Pretorius I.S."/>
            <person name="Egholm M."/>
            <person name="Chambers P.J."/>
        </authorList>
    </citation>
    <scope>NUCLEOTIDE SEQUENCE [LARGE SCALE GENOMIC DNA]</scope>
    <source>
        <strain>Lalvin QA23</strain>
    </source>
</reference>
<proteinExistence type="inferred from homology"/>
<accession>E7KMS3</accession>
<name>SHO1_YEASL</name>
<evidence type="ECO:0000250" key="1"/>
<evidence type="ECO:0000250" key="2">
    <source>
        <dbReference type="UniProtKB" id="P40073"/>
    </source>
</evidence>
<evidence type="ECO:0000255" key="3"/>
<evidence type="ECO:0000255" key="4">
    <source>
        <dbReference type="PROSITE-ProRule" id="PRU00192"/>
    </source>
</evidence>
<evidence type="ECO:0000256" key="5">
    <source>
        <dbReference type="SAM" id="MobiDB-lite"/>
    </source>
</evidence>
<evidence type="ECO:0000305" key="6"/>
<protein>
    <recommendedName>
        <fullName>High osmolarity signaling protein SHO1</fullName>
    </recommendedName>
    <alternativeName>
        <fullName>Osmosensor SHO1</fullName>
    </alternativeName>
    <alternativeName>
        <fullName>Suppressor of SUA8-1 mutation</fullName>
    </alternativeName>
    <alternativeName>
        <fullName>Synthetic high osmolarity-sensitive protein 1</fullName>
    </alternativeName>
</protein>
<keyword id="KW-1003">Cell membrane</keyword>
<keyword id="KW-0966">Cell projection</keyword>
<keyword id="KW-0325">Glycoprotein</keyword>
<keyword id="KW-0472">Membrane</keyword>
<keyword id="KW-0597">Phosphoprotein</keyword>
<keyword id="KW-0728">SH3 domain</keyword>
<keyword id="KW-0346">Stress response</keyword>
<keyword id="KW-0812">Transmembrane</keyword>
<keyword id="KW-1133">Transmembrane helix</keyword>
<comment type="function">
    <text evidence="1">Plasma membrane osmosensor that activates the high osmolarity glycerol (HOG) MAPK signaling pathway in response to high osmolarity. Detects changes in external osmolarity and activates PBS2 through the stimulation of STE11 and targets PBS2 to the plasma membrane. PBS2 activation leads to changes in glycerol production that helps to balance the intracellular and external osmotic pressures. Activates also HOG1 in response to heat stress and mediates resistance to oxidative stress. Involved in the regulation of the mating pathway. May be a receptor that feeds into the pseudohyphal growth pathway (By similarity).</text>
</comment>
<comment type="subunit">
    <text evidence="1">Forms homooligomers (By similarity). Interacts (via the SH3 domain) with PBS2. Interacts with FUS1, STE11, STE50 and RNA polymerase II (By similarity).</text>
</comment>
<comment type="subcellular location">
    <subcellularLocation>
        <location evidence="1">Cell membrane</location>
        <topology evidence="1">Multi-pass membrane protein</topology>
    </subcellularLocation>
    <subcellularLocation>
        <location evidence="1">Bud</location>
    </subcellularLocation>
    <subcellularLocation>
        <location evidence="1">Bud neck</location>
    </subcellularLocation>
    <subcellularLocation>
        <location evidence="1">Cell projection</location>
    </subcellularLocation>
    <text evidence="1">Localizes at the tip of the mating projection during conjugation.</text>
</comment>
<comment type="similarity">
    <text evidence="6">Belongs to the SHO1 family.</text>
</comment>
<gene>
    <name type="primary">SHO1</name>
    <name type="synonym">SSU81</name>
    <name type="ORF">QA23_1388</name>
</gene>